<accession>C6DKQ4</accession>
<gene>
    <name evidence="1" type="primary">nagK</name>
    <name type="ordered locus">PC1_2474</name>
</gene>
<organism>
    <name type="scientific">Pectobacterium carotovorum subsp. carotovorum (strain PC1)</name>
    <dbReference type="NCBI Taxonomy" id="561230"/>
    <lineage>
        <taxon>Bacteria</taxon>
        <taxon>Pseudomonadati</taxon>
        <taxon>Pseudomonadota</taxon>
        <taxon>Gammaproteobacteria</taxon>
        <taxon>Enterobacterales</taxon>
        <taxon>Pectobacteriaceae</taxon>
        <taxon>Pectobacterium</taxon>
    </lineage>
</organism>
<name>NAGK_PECCP</name>
<reference key="1">
    <citation type="submission" date="2009-07" db="EMBL/GenBank/DDBJ databases">
        <title>Complete sequence of Pectobacterium carotovorum subsp. carotovorum PC1.</title>
        <authorList>
            <consortium name="US DOE Joint Genome Institute"/>
            <person name="Lucas S."/>
            <person name="Copeland A."/>
            <person name="Lapidus A."/>
            <person name="Glavina del Rio T."/>
            <person name="Tice H."/>
            <person name="Bruce D."/>
            <person name="Goodwin L."/>
            <person name="Pitluck S."/>
            <person name="Munk A.C."/>
            <person name="Brettin T."/>
            <person name="Detter J.C."/>
            <person name="Han C."/>
            <person name="Tapia R."/>
            <person name="Larimer F."/>
            <person name="Land M."/>
            <person name="Hauser L."/>
            <person name="Kyrpides N."/>
            <person name="Mikhailova N."/>
            <person name="Balakrishnan V."/>
            <person name="Glasner J."/>
            <person name="Perna N.T."/>
        </authorList>
    </citation>
    <scope>NUCLEOTIDE SEQUENCE [LARGE SCALE GENOMIC DNA]</scope>
    <source>
        <strain>PC1</strain>
    </source>
</reference>
<proteinExistence type="inferred from homology"/>
<comment type="function">
    <text evidence="1">Catalyzes the phosphorylation of N-acetyl-D-glucosamine (GlcNAc) derived from cell-wall degradation, yielding GlcNAc-6-P.</text>
</comment>
<comment type="catalytic activity">
    <reaction evidence="1">
        <text>N-acetyl-D-glucosamine + ATP = N-acetyl-D-glucosamine 6-phosphate + ADP + H(+)</text>
        <dbReference type="Rhea" id="RHEA:17417"/>
        <dbReference type="ChEBI" id="CHEBI:15378"/>
        <dbReference type="ChEBI" id="CHEBI:30616"/>
        <dbReference type="ChEBI" id="CHEBI:57513"/>
        <dbReference type="ChEBI" id="CHEBI:456216"/>
        <dbReference type="ChEBI" id="CHEBI:506227"/>
        <dbReference type="EC" id="2.7.1.59"/>
    </reaction>
</comment>
<comment type="pathway">
    <text evidence="1">Cell wall biogenesis; peptidoglycan recycling.</text>
</comment>
<comment type="similarity">
    <text evidence="1">Belongs to the ROK (NagC/XylR) family. NagK subfamily.</text>
</comment>
<evidence type="ECO:0000255" key="1">
    <source>
        <dbReference type="HAMAP-Rule" id="MF_01271"/>
    </source>
</evidence>
<dbReference type="EC" id="2.7.1.59" evidence="1"/>
<dbReference type="EMBL" id="CP001657">
    <property type="protein sequence ID" value="ACT13505.1"/>
    <property type="molecule type" value="Genomic_DNA"/>
</dbReference>
<dbReference type="RefSeq" id="WP_015840685.1">
    <property type="nucleotide sequence ID" value="NC_012917.1"/>
</dbReference>
<dbReference type="SMR" id="C6DKQ4"/>
<dbReference type="STRING" id="561230.PC1_2474"/>
<dbReference type="KEGG" id="pct:PC1_2474"/>
<dbReference type="eggNOG" id="COG1940">
    <property type="taxonomic scope" value="Bacteria"/>
</dbReference>
<dbReference type="HOGENOM" id="CLU_036604_0_3_6"/>
<dbReference type="OrthoDB" id="9810372at2"/>
<dbReference type="UniPathway" id="UPA00544"/>
<dbReference type="Proteomes" id="UP000002736">
    <property type="component" value="Chromosome"/>
</dbReference>
<dbReference type="GO" id="GO:0005524">
    <property type="term" value="F:ATP binding"/>
    <property type="evidence" value="ECO:0007669"/>
    <property type="project" value="UniProtKB-UniRule"/>
</dbReference>
<dbReference type="GO" id="GO:0045127">
    <property type="term" value="F:N-acetylglucosamine kinase activity"/>
    <property type="evidence" value="ECO:0007669"/>
    <property type="project" value="UniProtKB-UniRule"/>
</dbReference>
<dbReference type="GO" id="GO:0008270">
    <property type="term" value="F:zinc ion binding"/>
    <property type="evidence" value="ECO:0007669"/>
    <property type="project" value="UniProtKB-UniRule"/>
</dbReference>
<dbReference type="GO" id="GO:0006044">
    <property type="term" value="P:N-acetylglucosamine metabolic process"/>
    <property type="evidence" value="ECO:0007669"/>
    <property type="project" value="UniProtKB-UniRule"/>
</dbReference>
<dbReference type="GO" id="GO:0009254">
    <property type="term" value="P:peptidoglycan turnover"/>
    <property type="evidence" value="ECO:0007669"/>
    <property type="project" value="UniProtKB-UniRule"/>
</dbReference>
<dbReference type="CDD" id="cd24057">
    <property type="entry name" value="ASKHA_NBD_ROK_NAGK"/>
    <property type="match status" value="1"/>
</dbReference>
<dbReference type="FunFam" id="3.30.420.40:FF:000049">
    <property type="entry name" value="N-acetyl-D-glucosamine kinase"/>
    <property type="match status" value="1"/>
</dbReference>
<dbReference type="Gene3D" id="3.30.420.40">
    <property type="match status" value="2"/>
</dbReference>
<dbReference type="HAMAP" id="MF_01271">
    <property type="entry name" value="GlcNAc_kinase"/>
    <property type="match status" value="1"/>
</dbReference>
<dbReference type="InterPro" id="IPR043129">
    <property type="entry name" value="ATPase_NBD"/>
</dbReference>
<dbReference type="InterPro" id="IPR023505">
    <property type="entry name" value="N-acetyl-D-glucosamine_kinase"/>
</dbReference>
<dbReference type="InterPro" id="IPR000600">
    <property type="entry name" value="ROK"/>
</dbReference>
<dbReference type="InterPro" id="IPR049874">
    <property type="entry name" value="ROK_cs"/>
</dbReference>
<dbReference type="NCBIfam" id="NF009835">
    <property type="entry name" value="PRK13310.1"/>
    <property type="match status" value="1"/>
</dbReference>
<dbReference type="PANTHER" id="PTHR18964:SF162">
    <property type="entry name" value="N-ACETYL-D-GLUCOSAMINE KINASE"/>
    <property type="match status" value="1"/>
</dbReference>
<dbReference type="PANTHER" id="PTHR18964">
    <property type="entry name" value="ROK (REPRESSOR, ORF, KINASE) FAMILY"/>
    <property type="match status" value="1"/>
</dbReference>
<dbReference type="Pfam" id="PF00480">
    <property type="entry name" value="ROK"/>
    <property type="match status" value="1"/>
</dbReference>
<dbReference type="SUPFAM" id="SSF53067">
    <property type="entry name" value="Actin-like ATPase domain"/>
    <property type="match status" value="1"/>
</dbReference>
<dbReference type="PROSITE" id="PS01125">
    <property type="entry name" value="ROK"/>
    <property type="match status" value="1"/>
</dbReference>
<keyword id="KW-0067">ATP-binding</keyword>
<keyword id="KW-0119">Carbohydrate metabolism</keyword>
<keyword id="KW-0418">Kinase</keyword>
<keyword id="KW-0479">Metal-binding</keyword>
<keyword id="KW-0547">Nucleotide-binding</keyword>
<keyword id="KW-0808">Transferase</keyword>
<keyword id="KW-0862">Zinc</keyword>
<sequence length="304" mass="33205">MYYGFDMGGTKIELGVFDAELNKVWQKRVLTPRTHYDELLTTLVDLVHEADAQVGVQGKVGIGIPGIQTGDNDALFTANLPAAMGKPLRTDLSQRLQRDVRINNDANCFVLSEAWDAEFRSYPVVLGLILGTGLGGGLVINGRPVDGRNGIAGEFGHLRLPSDALDIIGVDIPRVKCGCGQSGCIENYISGRGFEWLYEHMYGEALPAVTIIRHYRGGEEKAREFVDRFMDLLAACLGNLLTLFDPHLLVLGGGLSNFDEIYQILPTRLPSRLLPIAKLPRIEKARHGDAGGVRGAALLHLMDN</sequence>
<feature type="chain" id="PRO_1000214179" description="N-acetyl-D-glucosamine kinase">
    <location>
        <begin position="1"/>
        <end position="304"/>
    </location>
</feature>
<feature type="binding site" evidence="1">
    <location>
        <begin position="4"/>
        <end position="11"/>
    </location>
    <ligand>
        <name>ATP</name>
        <dbReference type="ChEBI" id="CHEBI:30616"/>
    </ligand>
</feature>
<feature type="binding site" evidence="1">
    <location>
        <begin position="133"/>
        <end position="140"/>
    </location>
    <ligand>
        <name>ATP</name>
        <dbReference type="ChEBI" id="CHEBI:30616"/>
    </ligand>
</feature>
<feature type="binding site" evidence="1">
    <location>
        <position position="157"/>
    </location>
    <ligand>
        <name>Zn(2+)</name>
        <dbReference type="ChEBI" id="CHEBI:29105"/>
    </ligand>
</feature>
<feature type="binding site" evidence="1">
    <location>
        <position position="177"/>
    </location>
    <ligand>
        <name>Zn(2+)</name>
        <dbReference type="ChEBI" id="CHEBI:29105"/>
    </ligand>
</feature>
<feature type="binding site" evidence="1">
    <location>
        <position position="179"/>
    </location>
    <ligand>
        <name>Zn(2+)</name>
        <dbReference type="ChEBI" id="CHEBI:29105"/>
    </ligand>
</feature>
<feature type="binding site" evidence="1">
    <location>
        <position position="184"/>
    </location>
    <ligand>
        <name>Zn(2+)</name>
        <dbReference type="ChEBI" id="CHEBI:29105"/>
    </ligand>
</feature>
<protein>
    <recommendedName>
        <fullName evidence="1">N-acetyl-D-glucosamine kinase</fullName>
        <ecNumber evidence="1">2.7.1.59</ecNumber>
    </recommendedName>
    <alternativeName>
        <fullName evidence="1">GlcNAc kinase</fullName>
    </alternativeName>
</protein>